<dbReference type="EC" id="6.3.2.1" evidence="1"/>
<dbReference type="EMBL" id="FM954972">
    <property type="protein sequence ID" value="CAV19690.1"/>
    <property type="molecule type" value="Genomic_DNA"/>
</dbReference>
<dbReference type="SMR" id="B7VK04"/>
<dbReference type="STRING" id="575788.VS_2533"/>
<dbReference type="KEGG" id="vsp:VS_2533"/>
<dbReference type="PATRIC" id="fig|575788.5.peg.3792"/>
<dbReference type="eggNOG" id="COG0414">
    <property type="taxonomic scope" value="Bacteria"/>
</dbReference>
<dbReference type="HOGENOM" id="CLU_047148_0_0_6"/>
<dbReference type="UniPathway" id="UPA00028">
    <property type="reaction ID" value="UER00005"/>
</dbReference>
<dbReference type="Proteomes" id="UP000009100">
    <property type="component" value="Chromosome 1"/>
</dbReference>
<dbReference type="GO" id="GO:0005829">
    <property type="term" value="C:cytosol"/>
    <property type="evidence" value="ECO:0007669"/>
    <property type="project" value="TreeGrafter"/>
</dbReference>
<dbReference type="GO" id="GO:0005524">
    <property type="term" value="F:ATP binding"/>
    <property type="evidence" value="ECO:0007669"/>
    <property type="project" value="UniProtKB-KW"/>
</dbReference>
<dbReference type="GO" id="GO:0004592">
    <property type="term" value="F:pantoate-beta-alanine ligase activity"/>
    <property type="evidence" value="ECO:0007669"/>
    <property type="project" value="UniProtKB-UniRule"/>
</dbReference>
<dbReference type="GO" id="GO:0015940">
    <property type="term" value="P:pantothenate biosynthetic process"/>
    <property type="evidence" value="ECO:0007669"/>
    <property type="project" value="UniProtKB-UniRule"/>
</dbReference>
<dbReference type="CDD" id="cd00560">
    <property type="entry name" value="PanC"/>
    <property type="match status" value="1"/>
</dbReference>
<dbReference type="FunFam" id="3.40.50.620:FF:000013">
    <property type="entry name" value="Pantothenate synthetase"/>
    <property type="match status" value="1"/>
</dbReference>
<dbReference type="Gene3D" id="3.40.50.620">
    <property type="entry name" value="HUPs"/>
    <property type="match status" value="1"/>
</dbReference>
<dbReference type="Gene3D" id="3.30.1300.10">
    <property type="entry name" value="Pantoate-beta-alanine ligase, C-terminal domain"/>
    <property type="match status" value="1"/>
</dbReference>
<dbReference type="HAMAP" id="MF_00158">
    <property type="entry name" value="PanC"/>
    <property type="match status" value="1"/>
</dbReference>
<dbReference type="InterPro" id="IPR004821">
    <property type="entry name" value="Cyt_trans-like"/>
</dbReference>
<dbReference type="InterPro" id="IPR003721">
    <property type="entry name" value="Pantoate_ligase"/>
</dbReference>
<dbReference type="InterPro" id="IPR042176">
    <property type="entry name" value="Pantoate_ligase_C"/>
</dbReference>
<dbReference type="InterPro" id="IPR014729">
    <property type="entry name" value="Rossmann-like_a/b/a_fold"/>
</dbReference>
<dbReference type="NCBIfam" id="TIGR00125">
    <property type="entry name" value="cyt_tran_rel"/>
    <property type="match status" value="1"/>
</dbReference>
<dbReference type="NCBIfam" id="TIGR00018">
    <property type="entry name" value="panC"/>
    <property type="match status" value="1"/>
</dbReference>
<dbReference type="PANTHER" id="PTHR21299">
    <property type="entry name" value="CYTIDYLATE KINASE/PANTOATE-BETA-ALANINE LIGASE"/>
    <property type="match status" value="1"/>
</dbReference>
<dbReference type="PANTHER" id="PTHR21299:SF1">
    <property type="entry name" value="PANTOATE--BETA-ALANINE LIGASE"/>
    <property type="match status" value="1"/>
</dbReference>
<dbReference type="Pfam" id="PF02569">
    <property type="entry name" value="Pantoate_ligase"/>
    <property type="match status" value="1"/>
</dbReference>
<dbReference type="SUPFAM" id="SSF52374">
    <property type="entry name" value="Nucleotidylyl transferase"/>
    <property type="match status" value="1"/>
</dbReference>
<evidence type="ECO:0000255" key="1">
    <source>
        <dbReference type="HAMAP-Rule" id="MF_00158"/>
    </source>
</evidence>
<comment type="function">
    <text evidence="1">Catalyzes the condensation of pantoate with beta-alanine in an ATP-dependent reaction via a pantoyl-adenylate intermediate.</text>
</comment>
<comment type="catalytic activity">
    <reaction evidence="1">
        <text>(R)-pantoate + beta-alanine + ATP = (R)-pantothenate + AMP + diphosphate + H(+)</text>
        <dbReference type="Rhea" id="RHEA:10912"/>
        <dbReference type="ChEBI" id="CHEBI:15378"/>
        <dbReference type="ChEBI" id="CHEBI:15980"/>
        <dbReference type="ChEBI" id="CHEBI:29032"/>
        <dbReference type="ChEBI" id="CHEBI:30616"/>
        <dbReference type="ChEBI" id="CHEBI:33019"/>
        <dbReference type="ChEBI" id="CHEBI:57966"/>
        <dbReference type="ChEBI" id="CHEBI:456215"/>
        <dbReference type="EC" id="6.3.2.1"/>
    </reaction>
</comment>
<comment type="pathway">
    <text evidence="1">Cofactor biosynthesis; (R)-pantothenate biosynthesis; (R)-pantothenate from (R)-pantoate and beta-alanine: step 1/1.</text>
</comment>
<comment type="subunit">
    <text evidence="1">Homodimer.</text>
</comment>
<comment type="subcellular location">
    <subcellularLocation>
        <location evidence="1">Cytoplasm</location>
    </subcellularLocation>
</comment>
<comment type="miscellaneous">
    <text evidence="1">The reaction proceeds by a bi uni uni bi ping pong mechanism.</text>
</comment>
<comment type="similarity">
    <text evidence="1">Belongs to the pantothenate synthetase family.</text>
</comment>
<feature type="chain" id="PRO_1000123426" description="Pantothenate synthetase">
    <location>
        <begin position="1"/>
        <end position="296"/>
    </location>
</feature>
<feature type="active site" description="Proton donor" evidence="1">
    <location>
        <position position="37"/>
    </location>
</feature>
<feature type="binding site" evidence="1">
    <location>
        <begin position="30"/>
        <end position="37"/>
    </location>
    <ligand>
        <name>ATP</name>
        <dbReference type="ChEBI" id="CHEBI:30616"/>
    </ligand>
</feature>
<feature type="binding site" evidence="1">
    <location>
        <position position="61"/>
    </location>
    <ligand>
        <name>(R)-pantoate</name>
        <dbReference type="ChEBI" id="CHEBI:15980"/>
    </ligand>
</feature>
<feature type="binding site" evidence="1">
    <location>
        <position position="61"/>
    </location>
    <ligand>
        <name>beta-alanine</name>
        <dbReference type="ChEBI" id="CHEBI:57966"/>
    </ligand>
</feature>
<feature type="binding site" evidence="1">
    <location>
        <begin position="149"/>
        <end position="152"/>
    </location>
    <ligand>
        <name>ATP</name>
        <dbReference type="ChEBI" id="CHEBI:30616"/>
    </ligand>
</feature>
<feature type="binding site" evidence="1">
    <location>
        <position position="155"/>
    </location>
    <ligand>
        <name>(R)-pantoate</name>
        <dbReference type="ChEBI" id="CHEBI:15980"/>
    </ligand>
</feature>
<feature type="binding site" evidence="1">
    <location>
        <position position="178"/>
    </location>
    <ligand>
        <name>ATP</name>
        <dbReference type="ChEBI" id="CHEBI:30616"/>
    </ligand>
</feature>
<feature type="binding site" evidence="1">
    <location>
        <begin position="186"/>
        <end position="189"/>
    </location>
    <ligand>
        <name>ATP</name>
        <dbReference type="ChEBI" id="CHEBI:30616"/>
    </ligand>
</feature>
<reference key="1">
    <citation type="submission" date="2009-02" db="EMBL/GenBank/DDBJ databases">
        <title>Vibrio splendidus str. LGP32 complete genome.</title>
        <authorList>
            <person name="Mazel D."/>
            <person name="Le Roux F."/>
        </authorList>
    </citation>
    <scope>NUCLEOTIDE SEQUENCE [LARGE SCALE GENOMIC DNA]</scope>
    <source>
        <strain>LGP32</strain>
    </source>
</reference>
<keyword id="KW-0067">ATP-binding</keyword>
<keyword id="KW-0963">Cytoplasm</keyword>
<keyword id="KW-0436">Ligase</keyword>
<keyword id="KW-0547">Nucleotide-binding</keyword>
<keyword id="KW-0566">Pantothenate biosynthesis</keyword>
<accession>B7VK04</accession>
<protein>
    <recommendedName>
        <fullName evidence="1">Pantothenate synthetase</fullName>
        <shortName evidence="1">PS</shortName>
        <ecNumber evidence="1">6.3.2.1</ecNumber>
    </recommendedName>
    <alternativeName>
        <fullName evidence="1">Pantoate--beta-alanine ligase</fullName>
    </alternativeName>
    <alternativeName>
        <fullName evidence="1">Pantoate-activating enzyme</fullName>
    </alternativeName>
</protein>
<name>PANC_VIBA3</name>
<sequence length="296" mass="32964">MQTFAEIAALREQIKQFKRDGRTVAFVPTMGNLHEGHLTLVKKARELADIVVVSIFVNPMQFDRADDLNNYPRTLEADLNKLTGEGVELVFTPTPEVMYPDGLDKQTFVEVPGISHMLEGASRPGHFRGVSTIVTKLFNIVQPDFACFGEKDFQQLAVIRQMTTDLALDIEVVGVATVREMDGLAMSSRNSNLTIDERQRAPVLARTMRWISSAIRGGRDDYASVIEDATDQLRAADLQPDEIFICDVKTLQAITSESTQAVILMSAFLGKTRLIDNQVLDLVSETKEEVKEETAE</sequence>
<proteinExistence type="inferred from homology"/>
<organism>
    <name type="scientific">Vibrio atlanticus (strain LGP32)</name>
    <name type="common">Vibrio splendidus (strain Mel32)</name>
    <dbReference type="NCBI Taxonomy" id="575788"/>
    <lineage>
        <taxon>Bacteria</taxon>
        <taxon>Pseudomonadati</taxon>
        <taxon>Pseudomonadota</taxon>
        <taxon>Gammaproteobacteria</taxon>
        <taxon>Vibrionales</taxon>
        <taxon>Vibrionaceae</taxon>
        <taxon>Vibrio</taxon>
    </lineage>
</organism>
<gene>
    <name evidence="1" type="primary">panC</name>
    <name type="ordered locus">VS_2533</name>
</gene>